<proteinExistence type="inferred from homology"/>
<keyword id="KW-0975">Bacterial flagellum</keyword>
<comment type="function">
    <text evidence="1">Structural component of flagellum, the bacterial motility apparatus. Part of the rod structure of flagellar basal body (By similarity).</text>
</comment>
<comment type="subunit">
    <text evidence="1">The basal body constitutes a major portion of the flagellar organelle and consists of a number of rings mounted on a central rod. In Gram-negative bacteria, at least four rings, L, P, S and M are present, whereas Gram-positive bacteria lack the L and P rings. The rod consists of about 26 subunits of FlgG in the distal portion, and FlgB, FlgC and FlgF build up the proximal portion of the rod with about 6 subunits each. Rod assembly occurs by export via the flagellum-specific pathway of its constituent proteins and by their incorporation into the rod structure in the probable order of FlgB, FlgC, FlgF and FlgG. Another protein, FliE, also assembles onto the stable rod structure (By similarity).</text>
</comment>
<comment type="subcellular location">
    <subcellularLocation>
        <location evidence="1">Bacterial flagellum basal body</location>
    </subcellularLocation>
</comment>
<comment type="similarity">
    <text evidence="2">Belongs to the flagella basal body rod proteins family.</text>
</comment>
<accession>Q8GLP8</accession>
<organism>
    <name type="scientific">Aeromonas hydrophila</name>
    <dbReference type="NCBI Taxonomy" id="644"/>
    <lineage>
        <taxon>Bacteria</taxon>
        <taxon>Pseudomonadati</taxon>
        <taxon>Pseudomonadota</taxon>
        <taxon>Gammaproteobacteria</taxon>
        <taxon>Aeromonadales</taxon>
        <taxon>Aeromonadaceae</taxon>
        <taxon>Aeromonas</taxon>
    </lineage>
</organism>
<evidence type="ECO:0000250" key="1">
    <source>
        <dbReference type="UniProtKB" id="P16437"/>
    </source>
</evidence>
<evidence type="ECO:0000255" key="2"/>
<evidence type="ECO:0000269" key="3">
    <source>
    </source>
</evidence>
<evidence type="ECO:0000312" key="4">
    <source>
        <dbReference type="EMBL" id="AAN08637.1"/>
    </source>
</evidence>
<gene>
    <name evidence="4" type="primary">flgB</name>
</gene>
<dbReference type="EMBL" id="AY129558">
    <property type="protein sequence ID" value="AAN08637.1"/>
    <property type="molecule type" value="Genomic_DNA"/>
</dbReference>
<dbReference type="SMR" id="Q8GLP8"/>
<dbReference type="eggNOG" id="COG1815">
    <property type="taxonomic scope" value="Bacteria"/>
</dbReference>
<dbReference type="GO" id="GO:0030694">
    <property type="term" value="C:bacterial-type flagellum basal body, rod"/>
    <property type="evidence" value="ECO:0007669"/>
    <property type="project" value="InterPro"/>
</dbReference>
<dbReference type="GO" id="GO:0071978">
    <property type="term" value="P:bacterial-type flagellum-dependent swarming motility"/>
    <property type="evidence" value="ECO:0007669"/>
    <property type="project" value="TreeGrafter"/>
</dbReference>
<dbReference type="InterPro" id="IPR001444">
    <property type="entry name" value="Flag_bb_rod_N"/>
</dbReference>
<dbReference type="InterPro" id="IPR019776">
    <property type="entry name" value="Flagellar_basal_body_rod_CS"/>
</dbReference>
<dbReference type="InterPro" id="IPR006300">
    <property type="entry name" value="FlgB"/>
</dbReference>
<dbReference type="NCBIfam" id="TIGR01396">
    <property type="entry name" value="FlgB"/>
    <property type="match status" value="1"/>
</dbReference>
<dbReference type="PANTHER" id="PTHR30435:SF12">
    <property type="entry name" value="FLAGELLAR BASAL BODY ROD PROTEIN FLGB"/>
    <property type="match status" value="1"/>
</dbReference>
<dbReference type="PANTHER" id="PTHR30435">
    <property type="entry name" value="FLAGELLAR PROTEIN"/>
    <property type="match status" value="1"/>
</dbReference>
<dbReference type="Pfam" id="PF00460">
    <property type="entry name" value="Flg_bb_rod"/>
    <property type="match status" value="1"/>
</dbReference>
<dbReference type="PIRSF" id="PIRSF002889">
    <property type="entry name" value="Rod_FlgB"/>
    <property type="match status" value="1"/>
</dbReference>
<dbReference type="PROSITE" id="PS00588">
    <property type="entry name" value="FLAGELLA_BB_ROD"/>
    <property type="match status" value="1"/>
</dbReference>
<protein>
    <recommendedName>
        <fullName evidence="1 4">Flagellar basal body rod protein FlgB</fullName>
    </recommendedName>
</protein>
<sequence>MAISFDKAFGIHQYALSVRSKRAEVLSSNIANADTPGFKARDINFSQALEEAQHQQGFGLATTSEKHFALQSDAPGLTQYRNPLQPDTGDGNTVDVQQERSEFLRNSLEYQTSLEFMNSKISGLLKALKGEQ</sequence>
<feature type="chain" id="PRO_0000415701" description="Flagellar basal body rod protein FlgB">
    <location>
        <begin position="1"/>
        <end position="132"/>
    </location>
</feature>
<name>FLGB_AERHY</name>
<reference evidence="4" key="1">
    <citation type="journal article" date="2003" name="Microb. Pathog.">
        <title>A polar flagella operon (flg) of Aeromonas hydrophila contains genes required for lateral flagella expression.</title>
        <authorList>
            <person name="Altarriba M."/>
            <person name="Merino S."/>
            <person name="Gavin R."/>
            <person name="Canals R."/>
            <person name="Rabaan A."/>
            <person name="Shaw J.G."/>
            <person name="Tomas J.M."/>
        </authorList>
    </citation>
    <scope>NUCLEOTIDE SEQUENCE [GENOMIC DNA]</scope>
    <source>
        <strain evidence="3">AH-3</strain>
    </source>
</reference>